<reference key="1">
    <citation type="submission" date="2006-10" db="EMBL/GenBank/DDBJ databases">
        <title>Cloning and molecular characterization of Penicillium expansum ABC transporter gene involved in patulin biosynthesis.</title>
        <authorList>
            <person name="Puel O."/>
            <person name="Tadrist S."/>
            <person name="Dauteloup C."/>
            <person name="Lebrihi A."/>
        </authorList>
    </citation>
    <scope>NUCLEOTIDE SEQUENCE [GENOMIC DNA]</scope>
    <scope>IDENTIFICATION</scope>
    <scope>INDUCTION</scope>
    <source>
        <strain>NCPT44</strain>
    </source>
</reference>
<reference key="2">
    <citation type="journal article" date="2015" name="Mol. Plant Microbe Interact.">
        <title>Genome, transcriptome, and functional analyses of Penicillium expansum provide new insights into secondary metabolism and pathogenicity.</title>
        <authorList>
            <person name="Ballester A.R."/>
            <person name="Marcet-Houben M."/>
            <person name="Levin E."/>
            <person name="Sela N."/>
            <person name="Selma-Lazaro C."/>
            <person name="Carmona L."/>
            <person name="Wisniewski M."/>
            <person name="Droby S."/>
            <person name="Gonzalez-Candelas L."/>
            <person name="Gabaldon T."/>
        </authorList>
    </citation>
    <scope>NUCLEOTIDE SEQUENCE [LARGE SCALE GENOMIC DNA]</scope>
    <source>
        <strain>MD-8</strain>
    </source>
</reference>
<reference key="3">
    <citation type="journal article" date="2014" name="Int. J. Food Microbiol.">
        <title>Sequencing, physical organization and kinetic expression of the patulin biosynthetic gene cluster from Penicillium expansum.</title>
        <authorList>
            <person name="Tannous J."/>
            <person name="El Khoury R."/>
            <person name="Snini S.P."/>
            <person name="Lippi Y."/>
            <person name="El Khoury A."/>
            <person name="Atoui A."/>
            <person name="Lteif R."/>
            <person name="Oswald I.P."/>
            <person name="Puel O."/>
        </authorList>
    </citation>
    <scope>NUCLEOTIDE SEQUENCE [GENOMIC DNA]</scope>
    <source>
        <strain>NRRL 35695</strain>
    </source>
</reference>
<reference key="4">
    <citation type="journal article" date="2004" name="Int. J. Epidemiol.">
        <title>Clinical trial of patulin in the common cold. 1944.</title>
        <authorList>
            <consortium name="Patulin Clinical Trials Committee, Medical Research Council"/>
        </authorList>
    </citation>
    <scope>BIOTECHNOLOGY</scope>
</reference>
<reference key="5">
    <citation type="journal article" date="2012" name="Food Chem. Toxicol.">
        <title>DNA damage in organs of mice treated acutely with patulin, a known mycotoxin.</title>
        <authorList>
            <person name="de Melo F.T."/>
            <person name="de Oliveira I.M."/>
            <person name="Greggio S."/>
            <person name="Dacosta J.C."/>
            <person name="Guecheva T.N."/>
            <person name="Saffi J."/>
            <person name="Henriques J.A."/>
            <person name="Rosa R.M."/>
        </authorList>
    </citation>
    <scope>BIOTECHNOLOGY</scope>
</reference>
<reference key="6">
    <citation type="journal article" date="2016" name="Tumor Biol.">
        <title>The potential effect of patulin on mice bearing melanoma cells: an anti-tumour or carcinogenic effect?</title>
        <authorList>
            <person name="Boussabbeh M."/>
            <person name="Ben Salem I."/>
            <person name="Rjiba-Touati K."/>
            <person name="Bouyahya C."/>
            <person name="Neffati F."/>
            <person name="Najjar M.F."/>
            <person name="Bacha H."/>
            <person name="Abid-Essefi S."/>
        </authorList>
    </citation>
    <scope>BIOTECHNOLOGY</scope>
</reference>
<reference key="7">
    <citation type="journal article" date="2017" name="Mol. Plant Pathol.">
        <title>LaeA regulation of secondary metabolism modulates virulence in Penicillium expansum and is mediated by sucrose.</title>
        <authorList>
            <person name="Kumar D."/>
            <person name="Barad S."/>
            <person name="Chen Y."/>
            <person name="Luo X."/>
            <person name="Tannous J."/>
            <person name="Dubey A."/>
            <person name="Glam Matana N."/>
            <person name="Tian S."/>
            <person name="Li B."/>
            <person name="Keller N."/>
            <person name="Prusky D."/>
        </authorList>
    </citation>
    <scope>INDUCTION</scope>
</reference>
<reference key="8">
    <citation type="journal article" date="2018" name="Front. Plant Sci.">
        <title>Apple intrinsic factors modulating the global regulator, LaeA, the patulin gene cluster and patulin accumulation during fruit colonization by Penicillium expansum.</title>
        <authorList>
            <person name="Kumar D."/>
            <person name="Tannous J."/>
            <person name="Sionov E."/>
            <person name="Keller N."/>
            <person name="Prusky D."/>
        </authorList>
    </citation>
    <scope>FUNCTION</scope>
    <scope>INDUCTION</scope>
</reference>
<reference key="9">
    <citation type="journal article" date="2015" name="Mol. Plant Microbe Interact.">
        <title>Genomic characterization reveals insights into patulin biosynthesis and pathogenicity in Penicillium species.</title>
        <authorList>
            <person name="Li B."/>
            <person name="Zong Y."/>
            <person name="Du Z."/>
            <person name="Chen Y."/>
            <person name="Zhang Z."/>
            <person name="Qin G."/>
            <person name="Zhao W."/>
            <person name="Tian S."/>
        </authorList>
    </citation>
    <scope>FUNCTION</scope>
    <scope>INDUCTION</scope>
</reference>
<reference key="10">
    <citation type="journal article" date="2019" name="Environ. Microbiol.">
        <title>Dissection of patulin biosynthesis, spatial control and regulation mechanism in Penicillium expansum.</title>
        <authorList>
            <person name="Li B."/>
            <person name="Chen Y."/>
            <person name="Zong Y."/>
            <person name="Shang Y."/>
            <person name="Zhang Z."/>
            <person name="Xu X."/>
            <person name="Wang X."/>
            <person name="Long M."/>
            <person name="Tian S."/>
        </authorList>
    </citation>
    <scope>FUNCTION</scope>
    <scope>DISRUPTION PHENOTYPE</scope>
    <scope>SUBCELLULAR LOCATION</scope>
    <scope>INDUCTION</scope>
</reference>
<sequence length="1394" mass="155346">MVDNYHSSLDVAKTPIQSDADAQKSEAETEGPSSKSSQIAAGESIADSVRNFLELRQGGIPDDTGVVFDKISAVGSGTGSQDAPTVTSAAQSAFGLLSPLQNRQRKQYSRPILSGFSGTINPGEMLLVLGKPGSGCTTFLKTLSGLWDEYKEIQGELTLGGHPLLDVMKQRPQDILFCAESDDHFPTLTVAETLRFATRARCGPQVSAREIDTMVTQLAKLVGLGNVLNTKVGDAKIRGVSGGERRRVSLAEALATCARLICLDNPTHGLDSSTAVEFMEMMREWTTQSRCVAAMSVYQASDAIVSYFDKVLIINSGRQIYYGPVRDAKAYFEDLGFECLSTTTVADFLNVMSADPDVRRAQENRENQVPRTAEEFERAFSASPIYQEMQKSVQVAKERFQTNPSPLVKTSAFALPIWHQIWYCAGRQFRIVTSDYSLWAVELATIVVQSLVLGTLFRNQQRTTSSLFIFASALFYSVLVPALQSMAEFGNGFAQRPLILKQKRYQISRPIAYALGLVTTDVVWKVAAICYNIPLYFLTGFQRTAGNFFTWFLIIYLEHLALSMFFRSVAIFSPNMHRAVLPVGIFFNMYVLYTGLYVPAPQMQVWLGWLRYLNPLYYAFESVMVNEFRDLSYQCSASDPVPSGLGYNDMAHQVCAVVGSEPGDRLLSGASYIHAQYGFKTSHLWRNVGINAALFVFFALCSGIGMEMLKTPAGQLATVFYKSSPGVTHRRDKIDSETGQDQGNESSEMSAGQSNDALRLQEHQGPDKSHNLAWTNLCLDIKTKEGDQRLLNNLSGSVKSGQLKALMGVSGAGKTTLLNALAGRSTIGNLTGTLALNGQVLPTFFRSRMGYVQQQDIHLPTQTVREALQMTARLRRPESISVADKNAYVEKVIEWLSMEHIADALVGVPGAGLNLEQRKKVSIGVEMASKPEILFLDEPTSGLDGQSAMLIARLLRRLADSGQAILCTIHQPAAELIDQFDKLYLLSRGGNLVYDGSLGTRCHEAIQYFQPRSRPCGPEENPAEYFLAVIGAGSRNDAHMDWASLWNDSEQGKEREKAEESLVPAAEQAPQLEQQSLYSVPFHVQLWVVVQRTWLYYWREPDYVNSKLWMSVGNSLLNSLTHLQSPNTERGAYNRVFSAFMSLIVGPPLGLQVQPRFVTLRDIFVHRERESLTYHWLAFVLSAFIVELPFTFLSSLVYWLLWYFPVGYFNAPSRAGYSFLMYELFGVFATSLAQLCASLMPNIEAAFAANGFFFMFCNTFAGTLSPKPVTPSGWRWFYNISPLFYLGEGVTVDVLQDLPIRCEESEVSIFYAVNGTTCGQYAQDFLKTATGYLLNPASTTECQYCRYRDGQSYFQQYGYEFAHRHRNIGVFICFIAFNFTMVLVMTYLTKTRRH</sequence>
<gene>
    <name evidence="13" type="primary">patM</name>
    <name type="ORF">PEX2_082820</name>
</gene>
<proteinExistence type="evidence at protein level"/>
<evidence type="ECO:0000255" key="1"/>
<evidence type="ECO:0000255" key="2">
    <source>
        <dbReference type="PROSITE-ProRule" id="PRU00434"/>
    </source>
</evidence>
<evidence type="ECO:0000256" key="3">
    <source>
        <dbReference type="SAM" id="MobiDB-lite"/>
    </source>
</evidence>
<evidence type="ECO:0000269" key="4">
    <source>
    </source>
</evidence>
<evidence type="ECO:0000269" key="5">
    <source>
    </source>
</evidence>
<evidence type="ECO:0000269" key="6">
    <source>
    </source>
</evidence>
<evidence type="ECO:0000269" key="7">
    <source>
    </source>
</evidence>
<evidence type="ECO:0000269" key="8">
    <source>
    </source>
</evidence>
<evidence type="ECO:0000269" key="9">
    <source>
    </source>
</evidence>
<evidence type="ECO:0000269" key="10">
    <source>
    </source>
</evidence>
<evidence type="ECO:0000269" key="11">
    <source>
    </source>
</evidence>
<evidence type="ECO:0000269" key="12">
    <source>
    </source>
</evidence>
<evidence type="ECO:0000303" key="13">
    <source ref="1"/>
</evidence>
<evidence type="ECO:0000305" key="14"/>
<evidence type="ECO:0000305" key="15">
    <source>
    </source>
</evidence>
<evidence type="ECO:0000305" key="16">
    <source>
    </source>
</evidence>
<evidence type="ECO:0000305" key="17">
    <source>
    </source>
</evidence>
<evidence type="ECO:0000305" key="18">
    <source ref="1"/>
</evidence>
<name>PATM_PENEN</name>
<dbReference type="EMBL" id="EF051699">
    <property type="protein sequence ID" value="ABN48540.1"/>
    <property type="molecule type" value="Genomic_DNA"/>
</dbReference>
<dbReference type="EMBL" id="KF899892">
    <property type="protein sequence ID" value="AIG62140.1"/>
    <property type="molecule type" value="Genomic_DNA"/>
</dbReference>
<dbReference type="EMBL" id="JQFZ01000262">
    <property type="protein sequence ID" value="KGO52635.1"/>
    <property type="status" value="ALT_SEQ"/>
    <property type="molecule type" value="Genomic_DNA"/>
</dbReference>
<dbReference type="RefSeq" id="XP_016595365.1">
    <property type="nucleotide sequence ID" value="XM_016745552.1"/>
</dbReference>
<dbReference type="SMR" id="B6RAL1"/>
<dbReference type="STRING" id="27334.B6RAL1"/>
<dbReference type="GeneID" id="27680972"/>
<dbReference type="VEuPathDB" id="FungiDB:PEXP_094400"/>
<dbReference type="HOGENOM" id="CLU_000604_35_0_1"/>
<dbReference type="OrthoDB" id="245989at2759"/>
<dbReference type="UniPathway" id="UPA00918"/>
<dbReference type="Proteomes" id="UP000030143">
    <property type="component" value="Unassembled WGS sequence"/>
</dbReference>
<dbReference type="GO" id="GO:0005886">
    <property type="term" value="C:plasma membrane"/>
    <property type="evidence" value="ECO:0000314"/>
    <property type="project" value="GO_Central"/>
</dbReference>
<dbReference type="GO" id="GO:0005774">
    <property type="term" value="C:vacuolar membrane"/>
    <property type="evidence" value="ECO:0000314"/>
    <property type="project" value="GO_Central"/>
</dbReference>
<dbReference type="GO" id="GO:0140359">
    <property type="term" value="F:ABC-type transporter activity"/>
    <property type="evidence" value="ECO:0007669"/>
    <property type="project" value="InterPro"/>
</dbReference>
<dbReference type="GO" id="GO:0005524">
    <property type="term" value="F:ATP binding"/>
    <property type="evidence" value="ECO:0007669"/>
    <property type="project" value="UniProtKB-KW"/>
</dbReference>
<dbReference type="GO" id="GO:0016887">
    <property type="term" value="F:ATP hydrolysis activity"/>
    <property type="evidence" value="ECO:0007669"/>
    <property type="project" value="InterPro"/>
</dbReference>
<dbReference type="GO" id="GO:0140723">
    <property type="term" value="P:patulin biosynthetic process"/>
    <property type="evidence" value="ECO:0000315"/>
    <property type="project" value="GO_Central"/>
</dbReference>
<dbReference type="CDD" id="cd03233">
    <property type="entry name" value="ABCG_PDR_domain1"/>
    <property type="match status" value="1"/>
</dbReference>
<dbReference type="CDD" id="cd03232">
    <property type="entry name" value="ABCG_PDR_domain2"/>
    <property type="match status" value="1"/>
</dbReference>
<dbReference type="FunFam" id="3.40.50.300:FF:000054">
    <property type="entry name" value="ABC multidrug transporter atrF"/>
    <property type="match status" value="1"/>
</dbReference>
<dbReference type="Gene3D" id="3.40.50.300">
    <property type="entry name" value="P-loop containing nucleotide triphosphate hydrolases"/>
    <property type="match status" value="2"/>
</dbReference>
<dbReference type="InterPro" id="IPR003593">
    <property type="entry name" value="AAA+_ATPase"/>
</dbReference>
<dbReference type="InterPro" id="IPR013525">
    <property type="entry name" value="ABC2_TM"/>
</dbReference>
<dbReference type="InterPro" id="IPR003439">
    <property type="entry name" value="ABC_transporter-like_ATP-bd"/>
</dbReference>
<dbReference type="InterPro" id="IPR017871">
    <property type="entry name" value="ABC_transporter-like_CS"/>
</dbReference>
<dbReference type="InterPro" id="IPR034001">
    <property type="entry name" value="ABCG_PDR_1"/>
</dbReference>
<dbReference type="InterPro" id="IPR034003">
    <property type="entry name" value="ABCG_PDR_2"/>
</dbReference>
<dbReference type="InterPro" id="IPR027417">
    <property type="entry name" value="P-loop_NTPase"/>
</dbReference>
<dbReference type="InterPro" id="IPR010929">
    <property type="entry name" value="PDR_CDR_ABC"/>
</dbReference>
<dbReference type="PANTHER" id="PTHR19241">
    <property type="entry name" value="ATP-BINDING CASSETTE TRANSPORTER"/>
    <property type="match status" value="1"/>
</dbReference>
<dbReference type="Pfam" id="PF01061">
    <property type="entry name" value="ABC2_membrane"/>
    <property type="match status" value="2"/>
</dbReference>
<dbReference type="Pfam" id="PF00005">
    <property type="entry name" value="ABC_tran"/>
    <property type="match status" value="2"/>
</dbReference>
<dbReference type="Pfam" id="PF06422">
    <property type="entry name" value="PDR_CDR"/>
    <property type="match status" value="2"/>
</dbReference>
<dbReference type="SMART" id="SM00382">
    <property type="entry name" value="AAA"/>
    <property type="match status" value="2"/>
</dbReference>
<dbReference type="SUPFAM" id="SSF52540">
    <property type="entry name" value="P-loop containing nucleoside triphosphate hydrolases"/>
    <property type="match status" value="2"/>
</dbReference>
<dbReference type="PROSITE" id="PS00211">
    <property type="entry name" value="ABC_TRANSPORTER_1"/>
    <property type="match status" value="1"/>
</dbReference>
<dbReference type="PROSITE" id="PS50893">
    <property type="entry name" value="ABC_TRANSPORTER_2"/>
    <property type="match status" value="2"/>
</dbReference>
<protein>
    <recommendedName>
        <fullName evidence="13">ABC transporter patM</fullName>
    </recommendedName>
    <alternativeName>
        <fullName evidence="13">Patulin biosynthesis cluster protein M</fullName>
    </alternativeName>
</protein>
<comment type="function">
    <text evidence="12 15 16 17 18">ABC transporter; part of the gene cluster that mediates the biosynthesis of patulin, an acetate-derived tetraketide mycotoxin produced by several fungal species that shows antimicrobial properties against several bacteria (Probable) (PubMed:30680886). May be involved in the secretion of E-ascladiol to be converted to patulin by the secreted patulin synthase patE (Probable).</text>
</comment>
<comment type="pathway">
    <text evidence="12">Mycotoxin biosynthesis; patulin biosynthesis.</text>
</comment>
<comment type="subcellular location">
    <subcellularLocation>
        <location evidence="12">Vacuole membrane</location>
        <topology evidence="12">Multi-pass membrane protein</topology>
    </subcellularLocation>
    <subcellularLocation>
        <location evidence="12">Cell membrane</location>
        <topology evidence="12">Multi-pass membrane protein</topology>
    </subcellularLocation>
</comment>
<comment type="induction">
    <text evidence="6 8 10 11 12">Expression is correlated with the production of patulin (PubMed:25120234). Expression is positively regulated by the secondary metabolism regulator laeA (PubMed:27528575, PubMed:30100914). Expression is strongly decreased with increased sucrose concentrations. This decrease is lost in the presence of malic acid (PubMed:30100914). Expression is increased with pH changes from 2.5 to 3.5 in the presence of a limiting concentration of sucrose, 50 mM (PubMed:30100914). Natural phenols present in apple fruits such as chlorogenic acid or the flavonoid epicatechin modulate patulin biosynthesis. They increase expression in the absence of sucrose, have little impact in the presence of 15 mM sucrose, and decrease expression in 175 mM sucrose (PubMed:30100914). Expression is positively regulated by the patulin cluster-specific transcription factor patL (PubMed:25625822). Finally, expression is also positively regulated by the velvet family proteins transcription regulators veA, velB, velC, but not vosA (PubMed:30680886).</text>
</comment>
<comment type="disruption phenotype">
    <text evidence="12">Strongly reduces the production of patulin and leads to the production of a distinct dark-red pigment.</text>
</comment>
<comment type="biotechnology">
    <text evidence="4 5 9">Patulin was originally used as an antibiotic and specifically trialed to be used against the common cold, but it is no longer used for that purpose since it has been shown to induce immunological, neurological and gastrointestinal effects (PubMed:15082620). Genotoxic effects of patulin with dose-dependent increase in DNA strand breaks in brain, liver and kidneys have been detected in mice (PubMed:22222931). However, more recently, it has been proposed that patulin might also have anti-tumor properties (PubMed:26619846).</text>
</comment>
<comment type="similarity">
    <text evidence="14">Belongs to the ABC transporter superfamily. ABCG family. PDR (TC 3.A.1.205) subfamily.</text>
</comment>
<comment type="sequence caution" evidence="14">
    <conflict type="erroneous gene model prediction">
        <sequence resource="EMBL-CDS" id="KGO52635"/>
    </conflict>
</comment>
<accession>B6RAL1</accession>
<accession>A0A0A2JK17</accession>
<feature type="chain" id="PRO_0000445927" description="ABC transporter patM">
    <location>
        <begin position="1"/>
        <end position="1394"/>
    </location>
</feature>
<feature type="transmembrane region" description="Helical" evidence="1">
    <location>
        <begin position="437"/>
        <end position="457"/>
    </location>
</feature>
<feature type="transmembrane region" description="Helical" evidence="1">
    <location>
        <begin position="467"/>
        <end position="487"/>
    </location>
</feature>
<feature type="transmembrane region" description="Helical" evidence="1">
    <location>
        <begin position="511"/>
        <end position="531"/>
    </location>
</feature>
<feature type="transmembrane region" description="Helical" evidence="1">
    <location>
        <begin position="546"/>
        <end position="566"/>
    </location>
</feature>
<feature type="transmembrane region" description="Helical" evidence="1">
    <location>
        <begin position="579"/>
        <end position="599"/>
    </location>
</feature>
<feature type="transmembrane region" description="Helical" evidence="1">
    <location>
        <begin position="688"/>
        <end position="708"/>
    </location>
</feature>
<feature type="transmembrane region" description="Helical" evidence="1">
    <location>
        <begin position="1131"/>
        <end position="1151"/>
    </location>
</feature>
<feature type="transmembrane region" description="Helical" evidence="1">
    <location>
        <begin position="1177"/>
        <end position="1197"/>
    </location>
</feature>
<feature type="transmembrane region" description="Helical" evidence="1">
    <location>
        <begin position="1219"/>
        <end position="1239"/>
    </location>
</feature>
<feature type="transmembrane region" description="Helical" evidence="1">
    <location>
        <begin position="1245"/>
        <end position="1265"/>
    </location>
</feature>
<feature type="transmembrane region" description="Helical" evidence="1">
    <location>
        <begin position="1280"/>
        <end position="1300"/>
    </location>
</feature>
<feature type="transmembrane region" description="Helical" evidence="1">
    <location>
        <begin position="1368"/>
        <end position="1388"/>
    </location>
</feature>
<feature type="domain" description="ABC transporter 1" evidence="2">
    <location>
        <begin position="98"/>
        <end position="341"/>
    </location>
</feature>
<feature type="domain" description="ABC transporter 2" evidence="2">
    <location>
        <begin position="767"/>
        <end position="1013"/>
    </location>
</feature>
<feature type="region of interest" description="Disordered" evidence="3">
    <location>
        <begin position="1"/>
        <end position="41"/>
    </location>
</feature>
<feature type="region of interest" description="Disordered" evidence="3">
    <location>
        <begin position="727"/>
        <end position="755"/>
    </location>
</feature>
<feature type="compositionally biased region" description="Polar residues" evidence="3">
    <location>
        <begin position="737"/>
        <end position="755"/>
    </location>
</feature>
<feature type="binding site" evidence="2">
    <location>
        <begin position="808"/>
        <end position="815"/>
    </location>
    <ligand>
        <name>ATP</name>
        <dbReference type="ChEBI" id="CHEBI:30616"/>
    </ligand>
</feature>
<feature type="sequence variant" evidence="7">
    <original>C</original>
    <variation>CEMSPL</variation>
    <location>
        <position position="178"/>
    </location>
</feature>
<feature type="sequence variant" description="In strain: MD-8." evidence="7">
    <original>M</original>
    <variation>V</variation>
    <location>
        <position position="282"/>
    </location>
</feature>
<feature type="sequence variant" description="In strain: MD-8." evidence="7">
    <original>I</original>
    <variation>V</variation>
    <location>
        <position position="313"/>
    </location>
</feature>
<feature type="sequence variant" description="In strain: MD-8." evidence="7">
    <original>P</original>
    <variation>L</variation>
    <location>
        <position position="640"/>
    </location>
</feature>
<feature type="sequence variant" description="In strain: MD-8." evidence="7">
    <original>S</original>
    <variation>P</variation>
    <location>
        <position position="747"/>
    </location>
</feature>
<feature type="sequence variant" description="In strain: MD-8." evidence="7">
    <original>S</original>
    <variation>N</variation>
    <location>
        <position position="897"/>
    </location>
</feature>
<feature type="sequence variant" description="In strain: MD-8." evidence="7">
    <original>H</original>
    <variation>Y</variation>
    <location>
        <position position="1122"/>
    </location>
</feature>
<keyword id="KW-0067">ATP-binding</keyword>
<keyword id="KW-1003">Cell membrane</keyword>
<keyword id="KW-0472">Membrane</keyword>
<keyword id="KW-0547">Nucleotide-binding</keyword>
<keyword id="KW-1185">Reference proteome</keyword>
<keyword id="KW-0677">Repeat</keyword>
<keyword id="KW-0812">Transmembrane</keyword>
<keyword id="KW-1133">Transmembrane helix</keyword>
<keyword id="KW-0813">Transport</keyword>
<keyword id="KW-0926">Vacuole</keyword>
<organism>
    <name type="scientific">Penicillium expansum</name>
    <name type="common">Blue mold rot fungus</name>
    <dbReference type="NCBI Taxonomy" id="27334"/>
    <lineage>
        <taxon>Eukaryota</taxon>
        <taxon>Fungi</taxon>
        <taxon>Dikarya</taxon>
        <taxon>Ascomycota</taxon>
        <taxon>Pezizomycotina</taxon>
        <taxon>Eurotiomycetes</taxon>
        <taxon>Eurotiomycetidae</taxon>
        <taxon>Eurotiales</taxon>
        <taxon>Aspergillaceae</taxon>
        <taxon>Penicillium</taxon>
    </lineage>
</organism>